<protein>
    <recommendedName>
        <fullName evidence="21">Dihydromonacolin L-[lovastatin nonaketide synthase] thioesterase</fullName>
        <ecNumber evidence="13 17">3.1.2.31</ecNumber>
    </recommendedName>
    <alternativeName>
        <fullName evidence="20">Esterase lovG</fullName>
    </alternativeName>
    <alternativeName>
        <fullName evidence="20">Lovastatin biosynthesis cluster protein G</fullName>
    </alternativeName>
</protein>
<accession>Q9Y7C9</accession>
<organism>
    <name type="scientific">Aspergillus terreus</name>
    <dbReference type="NCBI Taxonomy" id="33178"/>
    <lineage>
        <taxon>Eukaryota</taxon>
        <taxon>Fungi</taxon>
        <taxon>Dikarya</taxon>
        <taxon>Ascomycota</taxon>
        <taxon>Pezizomycotina</taxon>
        <taxon>Eurotiomycetes</taxon>
        <taxon>Eurotiomycetidae</taxon>
        <taxon>Eurotiales</taxon>
        <taxon>Aspergillaceae</taxon>
        <taxon>Aspergillus</taxon>
        <taxon>Aspergillus subgen. Circumdati</taxon>
    </lineage>
</organism>
<evidence type="ECO:0000250" key="1">
    <source>
        <dbReference type="UniProtKB" id="P38777"/>
    </source>
</evidence>
<evidence type="ECO:0000269" key="2">
    <source>
    </source>
</evidence>
<evidence type="ECO:0000269" key="3">
    <source>
    </source>
</evidence>
<evidence type="ECO:0000269" key="4">
    <source>
    </source>
</evidence>
<evidence type="ECO:0000269" key="5">
    <source>
    </source>
</evidence>
<evidence type="ECO:0000269" key="6">
    <source>
    </source>
</evidence>
<evidence type="ECO:0000269" key="7">
    <source>
    </source>
</evidence>
<evidence type="ECO:0000269" key="8">
    <source>
    </source>
</evidence>
<evidence type="ECO:0000269" key="9">
    <source>
    </source>
</evidence>
<evidence type="ECO:0000269" key="10">
    <source>
    </source>
</evidence>
<evidence type="ECO:0000269" key="11">
    <source>
    </source>
</evidence>
<evidence type="ECO:0000269" key="12">
    <source>
    </source>
</evidence>
<evidence type="ECO:0000269" key="13">
    <source>
    </source>
</evidence>
<evidence type="ECO:0000269" key="14">
    <source>
    </source>
</evidence>
<evidence type="ECO:0000269" key="15">
    <source>
    </source>
</evidence>
<evidence type="ECO:0000269" key="16">
    <source>
    </source>
</evidence>
<evidence type="ECO:0000269" key="17">
    <source>
    </source>
</evidence>
<evidence type="ECO:0000269" key="18">
    <source>
    </source>
</evidence>
<evidence type="ECO:0000269" key="19">
    <source>
    </source>
</evidence>
<evidence type="ECO:0000303" key="20">
    <source>
    </source>
</evidence>
<evidence type="ECO:0000305" key="21"/>
<feature type="chain" id="PRO_0000449663" description="Dihydromonacolin L-[lovastatin nonaketide synthase] thioesterase">
    <location>
        <begin position="1"/>
        <end position="256"/>
    </location>
</feature>
<feature type="active site" description="Charge relay system" evidence="1">
    <location>
        <position position="122"/>
    </location>
</feature>
<feature type="active site" description="Charge relay system" evidence="1">
    <location>
        <position position="201"/>
    </location>
</feature>
<feature type="active site" description="Charge relay system" evidence="1">
    <location>
        <position position="229"/>
    </location>
</feature>
<dbReference type="EC" id="3.1.2.31" evidence="13 17"/>
<dbReference type="EMBL" id="AH007774">
    <property type="protein sequence ID" value="AAD34553.1"/>
    <property type="molecule type" value="Genomic_DNA"/>
</dbReference>
<dbReference type="SMR" id="Q9Y7C9"/>
<dbReference type="ESTHER" id="aspte-Q9Y7C9">
    <property type="family name" value="FSH1"/>
</dbReference>
<dbReference type="VEuPathDB" id="FungiDB:ATEG_09962"/>
<dbReference type="UniPathway" id="UPA00875"/>
<dbReference type="GO" id="GO:0005737">
    <property type="term" value="C:cytoplasm"/>
    <property type="evidence" value="ECO:0007669"/>
    <property type="project" value="TreeGrafter"/>
</dbReference>
<dbReference type="GO" id="GO:0005634">
    <property type="term" value="C:nucleus"/>
    <property type="evidence" value="ECO:0007669"/>
    <property type="project" value="TreeGrafter"/>
</dbReference>
<dbReference type="GO" id="GO:0016218">
    <property type="term" value="F:polyketide synthase activity"/>
    <property type="evidence" value="ECO:0000314"/>
    <property type="project" value="UniProt"/>
</dbReference>
<dbReference type="GO" id="GO:0016790">
    <property type="term" value="F:thiolester hydrolase activity"/>
    <property type="evidence" value="ECO:0000314"/>
    <property type="project" value="UniProt"/>
</dbReference>
<dbReference type="GO" id="GO:0140735">
    <property type="term" value="P:lovastatin biosynthetic process"/>
    <property type="evidence" value="ECO:0000314"/>
    <property type="project" value="GO_Central"/>
</dbReference>
<dbReference type="Gene3D" id="3.40.50.1820">
    <property type="entry name" value="alpha/beta hydrolase"/>
    <property type="match status" value="1"/>
</dbReference>
<dbReference type="InterPro" id="IPR029058">
    <property type="entry name" value="AB_hydrolase_fold"/>
</dbReference>
<dbReference type="InterPro" id="IPR005645">
    <property type="entry name" value="FSH-like_dom"/>
</dbReference>
<dbReference type="InterPro" id="IPR050593">
    <property type="entry name" value="LovG"/>
</dbReference>
<dbReference type="PANTHER" id="PTHR48070:SF3">
    <property type="entry name" value="ESTERASE DBAE-RELATED"/>
    <property type="match status" value="1"/>
</dbReference>
<dbReference type="PANTHER" id="PTHR48070">
    <property type="entry name" value="ESTERASE OVCA2"/>
    <property type="match status" value="1"/>
</dbReference>
<dbReference type="Pfam" id="PF03959">
    <property type="entry name" value="FSH1"/>
    <property type="match status" value="1"/>
</dbReference>
<dbReference type="SUPFAM" id="SSF53474">
    <property type="entry name" value="alpha/beta-Hydrolases"/>
    <property type="match status" value="1"/>
</dbReference>
<sequence>MRYQASPALVKAPRALLCIHGAGCSPAIFRVQLSKLRAALRENFEFVYVTAPFPSSAGPGILPVFADLGPYYSWFESSSDNNHNGPSVSERLAAVHDPIRRTIVDWQTQHPHIPIVGAIGFSEGALVTTLLLWQQQMGHLPWLPRMSVALLICPWYQDEASQYMRNEVMKNHDDDNDSKDTEWQEELVIRIPTLHLQGRDDFALAGSKMLVARHFSPREAQVLEFAGQHQFPNRPRDVLEVINRFRKLCVTAQTLE</sequence>
<gene>
    <name evidence="20" type="primary">lovG</name>
</gene>
<name>LOVG_ASPTE</name>
<reference key="1">
    <citation type="journal article" date="1999" name="Science">
        <title>Modulation of polyketide synthase activity by accessory proteins during lovastatin biosynthesis.</title>
        <authorList>
            <person name="Kennedy J."/>
            <person name="Auclair K."/>
            <person name="Kendrew S.G."/>
            <person name="Park C."/>
            <person name="Vederas J.C."/>
            <person name="Hutchinson C.R."/>
        </authorList>
    </citation>
    <scope>NUCLEOTIDE SEQUENCE [GENOMIC DNA]</scope>
    <scope>IDENTIFICATION</scope>
    <scope>PATHWAY</scope>
    <source>
        <strain>ATCC 20542 / MF4845</strain>
    </source>
</reference>
<reference key="2">
    <citation type="journal article" date="1980" name="Proc. Natl. Acad. Sci. U.S.A.">
        <title>Mevinolin: a highly potent competitive inhibitor of hydroxymethylglutaryl-coenzyme A reductase and a cholesterol-lowering agent.</title>
        <authorList>
            <person name="Alberts A.W."/>
            <person name="Chen J."/>
            <person name="Kuron G."/>
            <person name="Hunt V."/>
            <person name="Huff J."/>
            <person name="Hoffman C."/>
            <person name="Rothrock J."/>
            <person name="Lopez M."/>
            <person name="Joshua H."/>
            <person name="Harris E."/>
            <person name="Patchett A."/>
            <person name="Monaghan R."/>
            <person name="Currie S."/>
            <person name="Stapley E."/>
            <person name="Albers-Schonberg G."/>
            <person name="Hensens O."/>
            <person name="Hirshfield J."/>
            <person name="Hoogsteen K."/>
            <person name="Liesch J."/>
            <person name="Springer J."/>
        </authorList>
    </citation>
    <scope>BIOTECHNOLOGY</scope>
</reference>
<reference key="3">
    <citation type="journal article" date="1999" name="Chem. Biol.">
        <title>Lovastatin biosynthesis in Aspergillus terreus: characterization of blocked mutants, enzyme activities and a multifunctional polyketide synthase gene.</title>
        <authorList>
            <person name="Hendrickson L."/>
            <person name="Davis C.R."/>
            <person name="Roach C."/>
            <person name="Nguyen D.K."/>
            <person name="Aldrich T."/>
            <person name="McAda P.C."/>
            <person name="Reeves C.D."/>
        </authorList>
    </citation>
    <scope>FUNCTION</scope>
</reference>
<reference key="4">
    <citation type="journal article" date="2003" name="Org. Biomol. Chem.">
        <title>Transformations of cyclic nonaketides by Aspergillus terreus mutants blocked for lovastatin biosynthesis at the lovA and lovC genes.</title>
        <authorList>
            <person name="Sorensen J.L."/>
            <person name="Auclair K."/>
            <person name="Kennedy J."/>
            <person name="Hutchinson C.R."/>
            <person name="Vederas J.C."/>
        </authorList>
    </citation>
    <scope>FUNCTION</scope>
    <scope>PATHWAY</scope>
    <scope>DISRUPTION PHENOTYPE</scope>
</reference>
<reference key="5">
    <citation type="journal article" date="2006" name="Chem. Biol.">
        <title>Biosynthesis of lovastatin analogs with a broadly specific acyltransferase.</title>
        <authorList>
            <person name="Xie X."/>
            <person name="Watanabe K."/>
            <person name="Wojcicki W.A."/>
            <person name="Wang C.C."/>
            <person name="Tang Y."/>
        </authorList>
    </citation>
    <scope>FUNCTION</scope>
</reference>
<reference key="6">
    <citation type="journal article" date="2009" name="Biotechnol. Bioeng.">
        <title>Rational improvement of simvastatin synthase solubility in Escherichia coli leads to higher whole-cell biocatalytic activity.</title>
        <authorList>
            <person name="Xie X."/>
            <person name="Pashkov I."/>
            <person name="Gao X."/>
            <person name="Guerrero J.L."/>
            <person name="Yeates T.O."/>
            <person name="Tang Y."/>
        </authorList>
    </citation>
    <scope>FUNCTION</scope>
</reference>
<reference key="7">
    <citation type="journal article" date="2009" name="Chem. Biol.">
        <title>Directed evolution and structural characterization of a simvastatin synthase.</title>
        <authorList>
            <person name="Gao X."/>
            <person name="Xie X."/>
            <person name="Pashkov I."/>
            <person name="Sawaya M.R."/>
            <person name="Laidman J."/>
            <person name="Zhang W."/>
            <person name="Cacho R."/>
            <person name="Yeates T.O."/>
            <person name="Tang Y."/>
        </authorList>
    </citation>
    <scope>FUNCTION</scope>
</reference>
<reference key="8">
    <citation type="journal article" date="2009" name="J. Am. Chem. Soc.">
        <title>Acyltransferase mediated polyketide release from a fungal megasynthase.</title>
        <authorList>
            <person name="Xie X."/>
            <person name="Meehan M.J."/>
            <person name="Xu W."/>
            <person name="Dorrestein P.C."/>
            <person name="Tang Y."/>
        </authorList>
    </citation>
    <scope>FUNCTION</scope>
</reference>
<reference key="9">
    <citation type="journal article" date="2009" name="Science">
        <title>Complete reconstitution of a highly reducing iterative polyketide synthase.</title>
        <authorList>
            <person name="Ma S.M."/>
            <person name="Li J.W."/>
            <person name="Choi J.W."/>
            <person name="Zhou H."/>
            <person name="Lee K.K."/>
            <person name="Moorthie V.A."/>
            <person name="Xie X."/>
            <person name="Kealey J.T."/>
            <person name="Da Silva N.A."/>
            <person name="Vederas J.C."/>
            <person name="Tang Y."/>
        </authorList>
    </citation>
    <scope>FUNCTION</scope>
    <scope>BIOTECHNOLOGY</scope>
</reference>
<reference key="10">
    <citation type="journal article" date="2011" name="Biochemistry">
        <title>FT-ICR-MS characterization of intermediates in the biosynthesis of the alpha-methylbutyrate side chain of lovastatin by the 277 kDa polyketide synthase LovF.</title>
        <authorList>
            <person name="Meehan M.J."/>
            <person name="Xie X."/>
            <person name="Zhao X."/>
            <person name="Xu W."/>
            <person name="Tang Y."/>
            <person name="Dorrestein P.C."/>
        </authorList>
    </citation>
    <scope>FUNCTION</scope>
</reference>
<reference key="11">
    <citation type="journal article" date="2011" name="J. Am. Chem. Soc.">
        <title>Double oxidation of the cyclic nonaketide dihydromonacolin L to monacolin J by a single cytochrome P450 monooxygenase, LovA.</title>
        <authorList>
            <person name="Barriuso J."/>
            <person name="Nguyen D.T."/>
            <person name="Li J.W."/>
            <person name="Roberts J.N."/>
            <person name="MacNevin G."/>
            <person name="Chaytor J.L."/>
            <person name="Marcus S.L."/>
            <person name="Vederas J.C."/>
            <person name="Ro D.K."/>
        </authorList>
    </citation>
    <scope>FUNCTION</scope>
    <scope>CATALYTIC ACTIVITY</scope>
    <scope>SUBCELLULAR LOCATION</scope>
    <scope>BIOPHYSICOCHEMICAL PROPERTIES</scope>
</reference>
<reference key="12">
    <citation type="journal article" date="2012" name="Proc. Natl. Acad. Sci. U.S.A.">
        <title>Crystal structure and biochemical studies of the trans-acting polyketide enoyl reductase LovC from lovastatin biosynthesis.</title>
        <authorList>
            <person name="Ames B.D."/>
            <person name="Nguyen C."/>
            <person name="Bruegger J."/>
            <person name="Smith P."/>
            <person name="Xu W."/>
            <person name="Ma S."/>
            <person name="Wong E."/>
            <person name="Wong S."/>
            <person name="Xie X."/>
            <person name="Li J.W."/>
            <person name="Vederas J.C."/>
            <person name="Tang Y."/>
            <person name="Tsai S.C."/>
        </authorList>
    </citation>
    <scope>FUNCTION</scope>
    <scope>BIOTECHNOLOGY</scope>
</reference>
<reference key="13">
    <citation type="journal article" date="2013" name="Angew. Chem. Int. Ed. Engl.">
        <title>LovG: the thioesterase required for dihydromonacolin L release and lovastatin nonaketide synthase turnover in lovastatin biosynthesis.</title>
        <authorList>
            <person name="Xu W."/>
            <person name="Chooi Y.H."/>
            <person name="Choi J.W."/>
            <person name="Li S."/>
            <person name="Vederas J.C."/>
            <person name="Da Silva N.A."/>
            <person name="Tang Y."/>
        </authorList>
    </citation>
    <scope>IDENTIFICATION</scope>
    <scope>FUNCTION</scope>
    <scope>CATALYTIC ACTIVITY</scope>
    <scope>PATHWAY</scope>
    <scope>DISRUPTION PHENOTYPE</scope>
</reference>
<reference key="14">
    <citation type="journal article" date="2014" name="Nat. Chem. Biol.">
        <title>The role of distant mutations and allosteric regulation on LovD active site dynamics.</title>
        <authorList>
            <person name="Jimenez-Oses G."/>
            <person name="Osuna S."/>
            <person name="Gao X."/>
            <person name="Sawaya M.R."/>
            <person name="Gilson L."/>
            <person name="Collier S.J."/>
            <person name="Huisman G.W."/>
            <person name="Yeates T.O."/>
            <person name="Tang Y."/>
            <person name="Houk K.N."/>
        </authorList>
    </citation>
    <scope>FUNCTION</scope>
</reference>
<reference key="15">
    <citation type="journal article" date="2017" name="Int. J. Mol. Sci.">
        <title>Simvastatin inhibits cell proliferation and migration in human anaplastic thyroid cancer.</title>
        <authorList>
            <person name="Chen M.C."/>
            <person name="Tsai Y.C."/>
            <person name="Tseng J.H."/>
            <person name="Liou J.J."/>
            <person name="Horng S."/>
            <person name="Wen H.C."/>
            <person name="Fan Y.C."/>
            <person name="Zhong W.B."/>
            <person name="Hsu S.P."/>
        </authorList>
    </citation>
    <scope>BIOTECHNOLOGY</scope>
</reference>
<reference key="16">
    <citation type="journal article" date="2018" name="Int. J. Mol. Sci.">
        <title>A synergistic anti-cancer effect of troglitazone and lovastatin in a human anaplastic thyroid cancer cell line and in a mouse xenograft model.</title>
        <authorList>
            <person name="Zhong W.B."/>
            <person name="Tsai Y.C."/>
            <person name="Chin L.H."/>
            <person name="Tseng J.H."/>
            <person name="Tang L.W."/>
            <person name="Horng S."/>
            <person name="Fan Y.C."/>
            <person name="Hsu S.P."/>
        </authorList>
    </citation>
    <scope>BIOTECHNOLOGY</scope>
</reference>
<reference key="17">
    <citation type="journal article" date="2021" name="Nat. Commun.">
        <title>Structural basis for the biosynthesis of lovastatin.</title>
        <authorList>
            <person name="Wang J."/>
            <person name="Liang J."/>
            <person name="Chen L."/>
            <person name="Zhang W."/>
            <person name="Kong L."/>
            <person name="Peng C."/>
            <person name="Su C."/>
            <person name="Tang Y."/>
            <person name="Deng Z."/>
            <person name="Wang Z."/>
        </authorList>
    </citation>
    <scope>FUNCTION</scope>
    <scope>CATALYTIC ACTIVITY</scope>
</reference>
<reference key="18">
    <citation type="journal article" date="2025" name="Microbiol. Res.">
        <title>Development of a landing pad system for Aspergillus niger and its application in the overproduction of monacolin J.</title>
        <authorList>
            <person name="Yao L."/>
            <person name="Zheng J."/>
            <person name="Wang B."/>
            <person name="Pan L."/>
        </authorList>
    </citation>
    <scope>FUNCTION</scope>
    <scope>PATHWAY</scope>
</reference>
<proteinExistence type="evidence at protein level"/>
<keyword id="KW-0378">Hydrolase</keyword>
<comment type="function">
    <text evidence="2 3 4 5 6 7 8 9 10 11 12 13 14 17 18">Esterase; part of the gene cluster that mediates the biosynthesis of lovastatin (also known as mevinolin, mevacor or monacolin K), a hypolipidemic inhibitor of (3S)-hydroxymethylglutaryl-coenzyme A (HMG-CoA) reductase (HMGR) (PubMed:10334994, PubMed:12929390, PubMed:21495633, PubMed:33558520, PubMed:39515266). The first step in the biosynthesis of lovastatin is the production of dihydromonacolin L acid by the lovastatin nonaketide synthase lovB and the trans-acting enoyl reductase lovC via condensation of one acetyl-CoA unit and 8 malonyl-CoA units (PubMed:10334994, PubMed:10381407, PubMed:19900898, PubMed:22733743, PubMed:33558520). Dihydromonacolin L acid is released from lovB by the thioesterase lovG (PubMed:23653178, PubMed:33558520). Next, dihydromonacolin L acid is oxidized by the dihydromonacolin L monooxygenase lovA twice to form monacolin J acid (PubMed:12929390, PubMed:21495633). The 2-methylbutyrate moiety of lovastatin is synthesized by the lovastatin diketide synthase lovF via condensation of one acetyl-CoA unit and one malonyl-CoA unit (PubMed:19530726, PubMed:21069965). Finally, the covalent attachment of this moiety to monacolin J acid is catalyzed by the transesterase lovD to yield lovastatin (PubMed:10334994, PubMed:17113998, PubMed:18988191, PubMed:19875080, PubMed:24727900). LovD has broad substrate specificity and can also convert monacolin J to simvastatin using alpha-dimethylbutanoyl-S-methyl-3-mercaptopropionate (DMB-S-MMP) as the thioester acyl donor, and can also catalyze the reverse reaction and function as hydrolase in vitro (PubMed:19875080). LovD has much higher activity with LovF-bound 2-methylbutanoate than with free diketide substrates (PubMed:21069965).</text>
</comment>
<comment type="function">
    <text evidence="13">Esterase that catalyzes the release of covalently bound dihydromonacolin L from LovB during lovastatin biosynthesis.</text>
</comment>
<comment type="catalytic activity">
    <reaction evidence="13 17">
        <text>dihydromonacolin L-[lovastatin nonaketide synthase] + H2O = holo-[lovastatin nonaketide synthase] + dihydromonacolin L carboxylate + H(+)</text>
        <dbReference type="Rhea" id="RHEA:11592"/>
        <dbReference type="Rhea" id="RHEA-COMP:10042"/>
        <dbReference type="Rhea" id="RHEA-COMP:10043"/>
        <dbReference type="ChEBI" id="CHEBI:15377"/>
        <dbReference type="ChEBI" id="CHEBI:15378"/>
        <dbReference type="ChEBI" id="CHEBI:64479"/>
        <dbReference type="ChEBI" id="CHEBI:79031"/>
        <dbReference type="ChEBI" id="CHEBI:79032"/>
        <dbReference type="EC" id="3.1.2.31"/>
    </reaction>
    <physiologicalReaction direction="left-to-right" evidence="13 17">
        <dbReference type="Rhea" id="RHEA:11593"/>
    </physiologicalReaction>
</comment>
<comment type="pathway">
    <text evidence="13 18">Polyketide biosynthesis; lovastatin biosynthesis.</text>
</comment>
<comment type="disruption phenotype">
    <text evidence="13">Strongly reduced lovastatin biosynthesis. Low levels of lovastatin are released due to complementation by other esterases.</text>
</comment>
<comment type="biotechnology">
    <text evidence="15 16 19">Lovastatin acts as a hypolipidemic agent that works as inhibitor of (3S)-hydroxymethylglutaryl-coenzyme A (HMG-CoA) reductase (HMGR) which reduces HMG-CoA to mevalonate and is the key step in cholesterol biosynthesis (PubMed:6933445). Lovastatin, simvastatin and related compounds are widely used to treat hypercholesteremia and reduce the risk of cardiovascular disease (PubMed:6933445). Furthermore, statins such as lovastatin were found to be anticancer agents (PubMed:29236027, PubMed:29932104).</text>
</comment>
<comment type="similarity">
    <text evidence="21">Belongs to the LovG family.</text>
</comment>